<accession>Q01674</accession>
<keyword id="KW-0998">Cell outer membrane</keyword>
<keyword id="KW-0406">Ion transport</keyword>
<keyword id="KW-0408">Iron</keyword>
<keyword id="KW-0410">Iron transport</keyword>
<keyword id="KW-0472">Membrane</keyword>
<keyword id="KW-0675">Receptor</keyword>
<keyword id="KW-0732">Signal</keyword>
<keyword id="KW-0798">TonB box</keyword>
<keyword id="KW-0812">Transmembrane</keyword>
<keyword id="KW-1134">Transmembrane beta strand</keyword>
<keyword id="KW-0813">Transport</keyword>
<name>FOXA_YEREN</name>
<organism>
    <name type="scientific">Yersinia enterocolitica</name>
    <dbReference type="NCBI Taxonomy" id="630"/>
    <lineage>
        <taxon>Bacteria</taxon>
        <taxon>Pseudomonadati</taxon>
        <taxon>Pseudomonadota</taxon>
        <taxon>Gammaproteobacteria</taxon>
        <taxon>Enterobacterales</taxon>
        <taxon>Yersiniaceae</taxon>
        <taxon>Yersinia</taxon>
    </lineage>
</organism>
<comment type="function">
    <text>Ferrioxamine binding and uptake, in association with the TonB protein.</text>
</comment>
<comment type="subcellular location">
    <subcellularLocation>
        <location evidence="2">Cell outer membrane</location>
        <topology evidence="2">Multi-pass membrane protein</topology>
    </subcellularLocation>
</comment>
<comment type="similarity">
    <text evidence="3">Belongs to the TonB-dependent receptor family.</text>
</comment>
<reference key="1">
    <citation type="journal article" date="1992" name="Mol. Microbiol.">
        <title>Ferrioxamine uptake in Yersinia enterocolitica: characterization of the receptor protein FoxA.</title>
        <authorList>
            <person name="Baeumler A.J."/>
            <person name="Hantke K."/>
        </authorList>
    </citation>
    <scope>NUCLEOTIDE SEQUENCE [GENOMIC DNA]</scope>
    <source>
        <strain>ATCC 51872 / WA-C / Serotype O:8</strain>
    </source>
</reference>
<reference key="2">
    <citation type="submission" date="1994-11" db="EMBL/GenBank/DDBJ databases">
        <authorList>
            <person name="Baeumler A.J."/>
        </authorList>
    </citation>
    <scope>SEQUENCE REVISION</scope>
</reference>
<dbReference type="EMBL" id="X60447">
    <property type="protein sequence ID" value="CAA42975.1"/>
    <property type="molecule type" value="Genomic_DNA"/>
</dbReference>
<dbReference type="PIR" id="S22673">
    <property type="entry name" value="S22673"/>
</dbReference>
<dbReference type="SMR" id="Q01674"/>
<dbReference type="STRING" id="1443113.LC20_04880"/>
<dbReference type="TCDB" id="1.B.14.1.17">
    <property type="family name" value="the outer membrane receptor (omr) family"/>
</dbReference>
<dbReference type="eggNOG" id="COG4774">
    <property type="taxonomic scope" value="Bacteria"/>
</dbReference>
<dbReference type="GO" id="GO:0009279">
    <property type="term" value="C:cell outer membrane"/>
    <property type="evidence" value="ECO:0007669"/>
    <property type="project" value="UniProtKB-SubCell"/>
</dbReference>
<dbReference type="GO" id="GO:0015344">
    <property type="term" value="F:siderophore uptake transmembrane transporter activity"/>
    <property type="evidence" value="ECO:0007669"/>
    <property type="project" value="TreeGrafter"/>
</dbReference>
<dbReference type="GO" id="GO:0038023">
    <property type="term" value="F:signaling receptor activity"/>
    <property type="evidence" value="ECO:0007669"/>
    <property type="project" value="InterPro"/>
</dbReference>
<dbReference type="CDD" id="cd01347">
    <property type="entry name" value="ligand_gated_channel"/>
    <property type="match status" value="1"/>
</dbReference>
<dbReference type="FunFam" id="2.170.130.10:FF:000001">
    <property type="entry name" value="Catecholate siderophore TonB-dependent receptor"/>
    <property type="match status" value="1"/>
</dbReference>
<dbReference type="Gene3D" id="2.40.170.20">
    <property type="entry name" value="TonB-dependent receptor, beta-barrel domain"/>
    <property type="match status" value="1"/>
</dbReference>
<dbReference type="Gene3D" id="2.170.130.10">
    <property type="entry name" value="TonB-dependent receptor, plug domain"/>
    <property type="match status" value="1"/>
</dbReference>
<dbReference type="InterPro" id="IPR012910">
    <property type="entry name" value="Plug_dom"/>
</dbReference>
<dbReference type="InterPro" id="IPR037066">
    <property type="entry name" value="Plug_dom_sf"/>
</dbReference>
<dbReference type="InterPro" id="IPR039426">
    <property type="entry name" value="TonB-dep_rcpt-like"/>
</dbReference>
<dbReference type="InterPro" id="IPR000531">
    <property type="entry name" value="TonB-dep_rcpt_b-brl"/>
</dbReference>
<dbReference type="InterPro" id="IPR036942">
    <property type="entry name" value="TonB_rcpt_b-brl_sf"/>
</dbReference>
<dbReference type="InterPro" id="IPR010917">
    <property type="entry name" value="TonB_rcpt_CS"/>
</dbReference>
<dbReference type="InterPro" id="IPR010105">
    <property type="entry name" value="TonB_sidphr_rcpt"/>
</dbReference>
<dbReference type="NCBIfam" id="TIGR01783">
    <property type="entry name" value="TonB-siderophor"/>
    <property type="match status" value="1"/>
</dbReference>
<dbReference type="PANTHER" id="PTHR32552">
    <property type="entry name" value="FERRICHROME IRON RECEPTOR-RELATED"/>
    <property type="match status" value="1"/>
</dbReference>
<dbReference type="PANTHER" id="PTHR32552:SF68">
    <property type="entry name" value="FERRICHROME OUTER MEMBRANE TRANSPORTER_PHAGE RECEPTOR"/>
    <property type="match status" value="1"/>
</dbReference>
<dbReference type="Pfam" id="PF07715">
    <property type="entry name" value="Plug"/>
    <property type="match status" value="1"/>
</dbReference>
<dbReference type="Pfam" id="PF00593">
    <property type="entry name" value="TonB_dep_Rec_b-barrel"/>
    <property type="match status" value="1"/>
</dbReference>
<dbReference type="SUPFAM" id="SSF56935">
    <property type="entry name" value="Porins"/>
    <property type="match status" value="1"/>
</dbReference>
<dbReference type="PROSITE" id="PS00430">
    <property type="entry name" value="TONB_DEPENDENT_REC_1"/>
    <property type="match status" value="1"/>
</dbReference>
<dbReference type="PROSITE" id="PS01156">
    <property type="entry name" value="TONB_DEPENDENT_REC_2"/>
    <property type="match status" value="1"/>
</dbReference>
<dbReference type="PROSITE" id="PS52016">
    <property type="entry name" value="TONB_DEPENDENT_REC_3"/>
    <property type="match status" value="1"/>
</dbReference>
<sequence length="710" mass="78383">MFSAFIIKRSAILCSLAMFIPLASIADDTIEVTAKAGHEADLPTSGYTATTTKGATKTDQPLILTAQSVSVVTRQQMDDQNVATVNQALNYTPGVFTGFSGGATRYDTVALRGFHGGDVNNTFLDGLRLLSDGGSYNVLQVDPWFLERIDVIKGPSSALYGQSIPGGVVMMTSKRPQFTSEGHFRLTAGNNNTQVAAFDYTDAISEHWAFRLTGITRNSDTMYDHQREERYAIAPSLLWQPDENTSLLLRANLQKDPSGGYHSAVPADGSIYGQKLSRGFFDGESNHNVFKRWQQIYSYEFSHKFDDVWSFRQNASYTHSNTQLEQVYQGGWNSDRTLMNRYYSGEDSSLNAFAVDNQLEADLRTAAVKHKVLLGVDFQKFRNNLRSDSAYATPLNPYTGVSGGSTLYSDYLLTTPGINTSYLSRRYEQSGVYLQDEMTLDNWHLNLSGRYDRMKTENINNTANSTDERTDNHASGRASLLYSFDSGISPYVSYSQAITPSLFPDAQQKLLKPMTSEQYEVGIIYQPPGSTSLYSAALYDLTQNDVANRAVPATYYVPAGKVNSQGLELEARSQISDRLSVIAGYTYNRVKFKDAIDGNDGNTPVLAPSNMASLWAQYEAGYGINVGAGIRYIGKQWADDANTLRVPSYTLGDASVRADLGTWAASLKGAFVQLNVNNIADKKYVAACYSTSYCYWGAERSVQATVGYDF</sequence>
<proteinExistence type="inferred from homology"/>
<gene>
    <name type="primary">foxA</name>
</gene>
<feature type="signal peptide" evidence="1">
    <location>
        <begin position="1"/>
        <end position="26"/>
    </location>
</feature>
<feature type="chain" id="PRO_0000034755" description="Ferrioxamine receptor">
    <location>
        <begin position="27"/>
        <end position="710"/>
    </location>
</feature>
<feature type="transmembrane region" description="Beta stranded" evidence="1">
    <location>
        <begin position="29"/>
        <end position="37"/>
    </location>
</feature>
<feature type="transmembrane region" description="Beta stranded" evidence="1">
    <location>
        <begin position="65"/>
        <end position="73"/>
    </location>
</feature>
<feature type="transmembrane region" description="Beta stranded" evidence="1">
    <location>
        <begin position="91"/>
        <end position="99"/>
    </location>
</feature>
<feature type="transmembrane region" description="Beta stranded" evidence="1">
    <location>
        <begin position="106"/>
        <end position="114"/>
    </location>
</feature>
<feature type="transmembrane region" description="Beta stranded" evidence="1">
    <location>
        <begin position="137"/>
        <end position="145"/>
    </location>
</feature>
<feature type="transmembrane region" description="Beta stranded" evidence="1">
    <location>
        <begin position="152"/>
        <end position="160"/>
    </location>
</feature>
<feature type="transmembrane region" description="Beta stranded" evidence="1">
    <location>
        <begin position="180"/>
        <end position="188"/>
    </location>
</feature>
<feature type="transmembrane region" description="Beta stranded" evidence="1">
    <location>
        <begin position="194"/>
        <end position="202"/>
    </location>
</feature>
<feature type="transmembrane region" description="Beta stranded" evidence="1">
    <location>
        <begin position="208"/>
        <end position="216"/>
    </location>
</feature>
<feature type="transmembrane region" description="Beta stranded" evidence="1">
    <location>
        <begin position="259"/>
        <end position="267"/>
    </location>
</feature>
<feature type="transmembrane region" description="Beta stranded" evidence="1">
    <location>
        <begin position="271"/>
        <end position="279"/>
    </location>
</feature>
<feature type="transmembrane region" description="Beta stranded" evidence="1">
    <location>
        <begin position="293"/>
        <end position="301"/>
    </location>
</feature>
<feature type="transmembrane region" description="Beta stranded" evidence="1">
    <location>
        <begin position="309"/>
        <end position="317"/>
    </location>
</feature>
<feature type="transmembrane region" description="Beta stranded" evidence="1">
    <location>
        <begin position="353"/>
        <end position="361"/>
    </location>
</feature>
<feature type="transmembrane region" description="Beta stranded" evidence="1">
    <location>
        <begin position="370"/>
        <end position="378"/>
    </location>
</feature>
<feature type="transmembrane region" description="Beta stranded" evidence="1">
    <location>
        <begin position="427"/>
        <end position="435"/>
    </location>
</feature>
<feature type="transmembrane region" description="Beta stranded" evidence="1">
    <location>
        <begin position="443"/>
        <end position="451"/>
    </location>
</feature>
<feature type="transmembrane region" description="Beta stranded" evidence="1">
    <location>
        <begin position="476"/>
        <end position="484"/>
    </location>
</feature>
<feature type="transmembrane region" description="Beta stranded" evidence="1">
    <location>
        <begin position="491"/>
        <end position="499"/>
    </location>
</feature>
<feature type="transmembrane region" description="Beta stranded" evidence="1">
    <location>
        <begin position="517"/>
        <end position="525"/>
    </location>
</feature>
<feature type="transmembrane region" description="Beta stranded" evidence="1">
    <location>
        <begin position="531"/>
        <end position="539"/>
    </location>
</feature>
<feature type="transmembrane region" description="Beta stranded" evidence="1">
    <location>
        <begin position="555"/>
        <end position="563"/>
    </location>
</feature>
<feature type="transmembrane region" description="Beta stranded" evidence="1">
    <location>
        <begin position="567"/>
        <end position="575"/>
    </location>
</feature>
<feature type="transmembrane region" description="Beta stranded" evidence="1">
    <location>
        <begin position="579"/>
        <end position="587"/>
    </location>
</feature>
<feature type="transmembrane region" description="Beta stranded" evidence="1">
    <location>
        <begin position="610"/>
        <end position="618"/>
    </location>
</feature>
<feature type="transmembrane region" description="Beta stranded" evidence="1">
    <location>
        <begin position="624"/>
        <end position="632"/>
    </location>
</feature>
<feature type="transmembrane region" description="Beta stranded" evidence="1">
    <location>
        <begin position="649"/>
        <end position="657"/>
    </location>
</feature>
<feature type="transmembrane region" description="Beta stranded" evidence="1">
    <location>
        <begin position="671"/>
        <end position="679"/>
    </location>
</feature>
<feature type="transmembrane region" description="Beta stranded" evidence="1">
    <location>
        <begin position="684"/>
        <end position="692"/>
    </location>
</feature>
<feature type="transmembrane region" description="Beta stranded" evidence="1">
    <location>
        <begin position="702"/>
        <end position="710"/>
    </location>
</feature>
<feature type="domain" description="TBDR plug" evidence="2">
    <location>
        <begin position="61"/>
        <end position="174"/>
    </location>
</feature>
<feature type="domain" description="TBDR beta-barrel" evidence="2">
    <location>
        <begin position="181"/>
        <end position="710"/>
    </location>
</feature>
<feature type="short sequence motif" description="TonB box">
    <location>
        <begin position="28"/>
        <end position="35"/>
    </location>
</feature>
<feature type="short sequence motif" description="TonB C-terminal box">
    <location>
        <begin position="693"/>
        <end position="710"/>
    </location>
</feature>
<evidence type="ECO:0000255" key="1"/>
<evidence type="ECO:0000255" key="2">
    <source>
        <dbReference type="PROSITE-ProRule" id="PRU01360"/>
    </source>
</evidence>
<evidence type="ECO:0000305" key="3"/>
<protein>
    <recommendedName>
        <fullName>Ferrioxamine receptor</fullName>
    </recommendedName>
</protein>